<name>PUR7_CHLSY</name>
<gene>
    <name evidence="1" type="primary">purC</name>
    <name type="ordered locus">Chy400_1381</name>
</gene>
<accession>B9LC05</accession>
<keyword id="KW-0067">ATP-binding</keyword>
<keyword id="KW-0436">Ligase</keyword>
<keyword id="KW-0547">Nucleotide-binding</keyword>
<keyword id="KW-0658">Purine biosynthesis</keyword>
<sequence length="249" mass="27579">MELGYVLTEGKTKIVYAHPTDPDLAILYHKDGITAGDGARRSVIEGKGELAGQTTANVFRLLNRAGIATHFVDAPEPRLTVVRRCRMIPLEVVMRRLPAGSYLRRHPEAAGQRFDPPLVEFFLKDDARHDPQIAPQEIIAQGIATPAEVEQMTDTGRKVFVTLEAAWQQLDVTLVDLKIEFGRTAQGDLLVADVIDNDSWRIWPSGDPAQMLDKQVYRNAQVVDEALLADVRARYALVAELTGRWGAGS</sequence>
<feature type="chain" id="PRO_1000122908" description="Phosphoribosylaminoimidazole-succinocarboxamide synthase">
    <location>
        <begin position="1"/>
        <end position="249"/>
    </location>
</feature>
<comment type="catalytic activity">
    <reaction evidence="1">
        <text>5-amino-1-(5-phospho-D-ribosyl)imidazole-4-carboxylate + L-aspartate + ATP = (2S)-2-[5-amino-1-(5-phospho-beta-D-ribosyl)imidazole-4-carboxamido]succinate + ADP + phosphate + 2 H(+)</text>
        <dbReference type="Rhea" id="RHEA:22628"/>
        <dbReference type="ChEBI" id="CHEBI:15378"/>
        <dbReference type="ChEBI" id="CHEBI:29991"/>
        <dbReference type="ChEBI" id="CHEBI:30616"/>
        <dbReference type="ChEBI" id="CHEBI:43474"/>
        <dbReference type="ChEBI" id="CHEBI:58443"/>
        <dbReference type="ChEBI" id="CHEBI:77657"/>
        <dbReference type="ChEBI" id="CHEBI:456216"/>
        <dbReference type="EC" id="6.3.2.6"/>
    </reaction>
</comment>
<comment type="pathway">
    <text evidence="1">Purine metabolism; IMP biosynthesis via de novo pathway; 5-amino-1-(5-phospho-D-ribosyl)imidazole-4-carboxamide from 5-amino-1-(5-phospho-D-ribosyl)imidazole-4-carboxylate: step 1/2.</text>
</comment>
<comment type="similarity">
    <text evidence="1">Belongs to the SAICAR synthetase family.</text>
</comment>
<proteinExistence type="inferred from homology"/>
<evidence type="ECO:0000255" key="1">
    <source>
        <dbReference type="HAMAP-Rule" id="MF_00137"/>
    </source>
</evidence>
<reference key="1">
    <citation type="submission" date="2009-01" db="EMBL/GenBank/DDBJ databases">
        <title>Complete sequence of Chloroflexus sp. Y-400-fl.</title>
        <authorList>
            <consortium name="US DOE Joint Genome Institute"/>
            <person name="Lucas S."/>
            <person name="Copeland A."/>
            <person name="Lapidus A."/>
            <person name="Glavina del Rio T."/>
            <person name="Dalin E."/>
            <person name="Tice H."/>
            <person name="Bruce D."/>
            <person name="Goodwin L."/>
            <person name="Pitluck S."/>
            <person name="Sims D."/>
            <person name="Kiss H."/>
            <person name="Brettin T."/>
            <person name="Detter J.C."/>
            <person name="Han C."/>
            <person name="Larimer F."/>
            <person name="Land M."/>
            <person name="Hauser L."/>
            <person name="Kyrpides N."/>
            <person name="Ovchinnikova G."/>
            <person name="Bryant D.A."/>
            <person name="Richardson P."/>
        </authorList>
    </citation>
    <scope>NUCLEOTIDE SEQUENCE [LARGE SCALE GENOMIC DNA]</scope>
    <source>
        <strain>ATCC 29364 / DSM 637 / Y-400-fl</strain>
    </source>
</reference>
<organism>
    <name type="scientific">Chloroflexus aurantiacus (strain ATCC 29364 / DSM 637 / Y-400-fl)</name>
    <dbReference type="NCBI Taxonomy" id="480224"/>
    <lineage>
        <taxon>Bacteria</taxon>
        <taxon>Bacillati</taxon>
        <taxon>Chloroflexota</taxon>
        <taxon>Chloroflexia</taxon>
        <taxon>Chloroflexales</taxon>
        <taxon>Chloroflexineae</taxon>
        <taxon>Chloroflexaceae</taxon>
        <taxon>Chloroflexus</taxon>
    </lineage>
</organism>
<dbReference type="EC" id="6.3.2.6" evidence="1"/>
<dbReference type="EMBL" id="CP001364">
    <property type="protein sequence ID" value="ACM52799.1"/>
    <property type="molecule type" value="Genomic_DNA"/>
</dbReference>
<dbReference type="SMR" id="B9LC05"/>
<dbReference type="KEGG" id="chl:Chy400_1381"/>
<dbReference type="HOGENOM" id="CLU_061495_1_1_0"/>
<dbReference type="OrthoDB" id="9801549at2"/>
<dbReference type="UniPathway" id="UPA00074">
    <property type="reaction ID" value="UER00131"/>
</dbReference>
<dbReference type="GO" id="GO:0005524">
    <property type="term" value="F:ATP binding"/>
    <property type="evidence" value="ECO:0007669"/>
    <property type="project" value="UniProtKB-KW"/>
</dbReference>
<dbReference type="GO" id="GO:0004639">
    <property type="term" value="F:phosphoribosylaminoimidazolesuccinocarboxamide synthase activity"/>
    <property type="evidence" value="ECO:0007669"/>
    <property type="project" value="UniProtKB-UniRule"/>
</dbReference>
<dbReference type="GO" id="GO:0006189">
    <property type="term" value="P:'de novo' IMP biosynthetic process"/>
    <property type="evidence" value="ECO:0007669"/>
    <property type="project" value="UniProtKB-UniRule"/>
</dbReference>
<dbReference type="CDD" id="cd01416">
    <property type="entry name" value="SAICAR_synt_Ade5"/>
    <property type="match status" value="1"/>
</dbReference>
<dbReference type="FunFam" id="3.30.200.20:FF:000865">
    <property type="entry name" value="Phosphoribosylaminoimidazole-succinocarboxamide synthase"/>
    <property type="match status" value="1"/>
</dbReference>
<dbReference type="FunFam" id="3.30.470.20:FF:000020">
    <property type="entry name" value="Probable multifunctional protein ADE2"/>
    <property type="match status" value="1"/>
</dbReference>
<dbReference type="Gene3D" id="3.30.470.20">
    <property type="entry name" value="ATP-grasp fold, B domain"/>
    <property type="match status" value="1"/>
</dbReference>
<dbReference type="Gene3D" id="3.30.200.20">
    <property type="entry name" value="Phosphorylase Kinase, domain 1"/>
    <property type="match status" value="1"/>
</dbReference>
<dbReference type="HAMAP" id="MF_00137">
    <property type="entry name" value="SAICAR_synth"/>
    <property type="match status" value="1"/>
</dbReference>
<dbReference type="InterPro" id="IPR028923">
    <property type="entry name" value="SAICAR_synt/ADE2_N"/>
</dbReference>
<dbReference type="InterPro" id="IPR050089">
    <property type="entry name" value="SAICAR_synthetase"/>
</dbReference>
<dbReference type="InterPro" id="IPR018236">
    <property type="entry name" value="SAICAR_synthetase_CS"/>
</dbReference>
<dbReference type="PANTHER" id="PTHR43599">
    <property type="entry name" value="MULTIFUNCTIONAL PROTEIN ADE2"/>
    <property type="match status" value="1"/>
</dbReference>
<dbReference type="PANTHER" id="PTHR43599:SF3">
    <property type="entry name" value="SI:DKEY-6E2.2"/>
    <property type="match status" value="1"/>
</dbReference>
<dbReference type="Pfam" id="PF01259">
    <property type="entry name" value="SAICAR_synt"/>
    <property type="match status" value="1"/>
</dbReference>
<dbReference type="SUPFAM" id="SSF56104">
    <property type="entry name" value="SAICAR synthase-like"/>
    <property type="match status" value="1"/>
</dbReference>
<dbReference type="PROSITE" id="PS01058">
    <property type="entry name" value="SAICAR_SYNTHETASE_2"/>
    <property type="match status" value="1"/>
</dbReference>
<protein>
    <recommendedName>
        <fullName evidence="1">Phosphoribosylaminoimidazole-succinocarboxamide synthase</fullName>
        <ecNumber evidence="1">6.3.2.6</ecNumber>
    </recommendedName>
    <alternativeName>
        <fullName evidence="1">SAICAR synthetase</fullName>
    </alternativeName>
</protein>